<accession>P47459</accession>
<reference key="1">
    <citation type="journal article" date="1995" name="Science">
        <title>The minimal gene complement of Mycoplasma genitalium.</title>
        <authorList>
            <person name="Fraser C.M."/>
            <person name="Gocayne J.D."/>
            <person name="White O."/>
            <person name="Adams M.D."/>
            <person name="Clayton R.A."/>
            <person name="Fleischmann R.D."/>
            <person name="Bult C.J."/>
            <person name="Kerlavage A.R."/>
            <person name="Sutton G.G."/>
            <person name="Kelley J.M."/>
            <person name="Fritchman J.L."/>
            <person name="Weidman J.F."/>
            <person name="Small K.V."/>
            <person name="Sandusky M."/>
            <person name="Fuhrmann J.L."/>
            <person name="Nguyen D.T."/>
            <person name="Utterback T.R."/>
            <person name="Saudek D.M."/>
            <person name="Phillips C.A."/>
            <person name="Merrick J.M."/>
            <person name="Tomb J.-F."/>
            <person name="Dougherty B.A."/>
            <person name="Bott K.F."/>
            <person name="Hu P.-C."/>
            <person name="Lucier T.S."/>
            <person name="Peterson S.N."/>
            <person name="Smith H.O."/>
            <person name="Hutchison C.A. III"/>
            <person name="Venter J.C."/>
        </authorList>
    </citation>
    <scope>NUCLEOTIDE SEQUENCE [LARGE SCALE GENOMIC DNA]</scope>
    <source>
        <strain>ATCC 33530 / DSM 19775 / NCTC 10195 / G37</strain>
    </source>
</reference>
<name>P65H_MYCGE</name>
<keyword id="KW-1185">Reference proteome</keyword>
<keyword id="KW-0677">Repeat</keyword>
<dbReference type="EMBL" id="L43967">
    <property type="protein sequence ID" value="AAC71436.1"/>
    <property type="molecule type" value="Genomic_DNA"/>
</dbReference>
<dbReference type="PIR" id="I64223">
    <property type="entry name" value="I64223"/>
</dbReference>
<dbReference type="RefSeq" id="WP_010869376.1">
    <property type="nucleotide sequence ID" value="NC_000908.2"/>
</dbReference>
<dbReference type="SMR" id="P47459"/>
<dbReference type="STRING" id="243273.MG_217"/>
<dbReference type="GeneID" id="88282360"/>
<dbReference type="KEGG" id="mge:MG_217"/>
<dbReference type="eggNOG" id="COG3266">
    <property type="taxonomic scope" value="Bacteria"/>
</dbReference>
<dbReference type="HOGENOM" id="CLU_741505_0_0_14"/>
<dbReference type="InParanoid" id="P47459"/>
<dbReference type="OrthoDB" id="10009228at2"/>
<dbReference type="BioCyc" id="MGEN243273:G1GJ2-261-MONOMER"/>
<dbReference type="Proteomes" id="UP000000807">
    <property type="component" value="Chromosome"/>
</dbReference>
<sequence>MEKNRSAFQQNQQASNQPFNQDQNQYYQDPNQQQFNQSGFDPNQQQFNQPGFDPNQQYYQDPNQQQFNQAGFDQNQQYYQDPNQQQFNQPGFDPNQQYYQDPNQQQFNQAGFDQNQYYQDPNQQQFNQSGFDQNQYYQDPNQQQFNQPSFDLNNQQFNQPGFNQSPAFEITPQEQKAEQEMFGEEPPQVVREIHELPFEKIRSFLQSDFDSYNFRLNSLKSKLDNALYSLDKTIQNTNENTANLEAIRHNLEQKIQNQSKQLRTNFDTQKLDDKINELEIRMQKLTRNFESLSELSKHNSYPNYYEKLLPNGGDSMTNVFEKALMMNLLRTTLPPQPQVQYYPQPYPYIRPYYDEPIYAGFRRRGYRDDFYE</sequence>
<organism>
    <name type="scientific">Mycoplasma genitalium (strain ATCC 33530 / DSM 19775 / NCTC 10195 / G37)</name>
    <name type="common">Mycoplasmoides genitalium</name>
    <dbReference type="NCBI Taxonomy" id="243273"/>
    <lineage>
        <taxon>Bacteria</taxon>
        <taxon>Bacillati</taxon>
        <taxon>Mycoplasmatota</taxon>
        <taxon>Mycoplasmoidales</taxon>
        <taxon>Mycoplasmoidaceae</taxon>
        <taxon>Mycoplasmoides</taxon>
    </lineage>
</organism>
<gene>
    <name type="ordered locus">MG217</name>
</gene>
<protein>
    <recommendedName>
        <fullName>Proline-rich P65 protein homolog</fullName>
    </recommendedName>
</protein>
<feature type="chain" id="PRO_0000058144" description="Proline-rich P65 protein homolog">
    <location>
        <begin position="1"/>
        <end position="372"/>
    </location>
</feature>
<feature type="repeat" description="1-1">
    <location>
        <begin position="29"/>
        <end position="40"/>
    </location>
</feature>
<feature type="repeat" description="1-2">
    <location>
        <begin position="41"/>
        <end position="52"/>
    </location>
</feature>
<feature type="repeat" description="2-1">
    <location>
        <begin position="53"/>
        <end position="60"/>
    </location>
</feature>
<feature type="repeat" description="1-3">
    <location>
        <begin position="61"/>
        <end position="72"/>
    </location>
</feature>
<feature type="repeat" description="2-2">
    <location>
        <begin position="73"/>
        <end position="80"/>
    </location>
</feature>
<feature type="repeat" description="1-4">
    <location>
        <begin position="81"/>
        <end position="92"/>
    </location>
</feature>
<feature type="repeat" description="2-3">
    <location>
        <begin position="93"/>
        <end position="100"/>
    </location>
</feature>
<feature type="repeat" description="1-5">
    <location>
        <begin position="101"/>
        <end position="112"/>
    </location>
</feature>
<feature type="repeat" description="2-4">
    <location>
        <begin position="113"/>
        <end position="119"/>
    </location>
</feature>
<feature type="repeat" description="1-6">
    <location>
        <begin position="120"/>
        <end position="131"/>
    </location>
</feature>
<feature type="repeat" description="2-5">
    <location>
        <begin position="132"/>
        <end position="138"/>
    </location>
</feature>
<feature type="repeat" description="1-7">
    <location>
        <begin position="139"/>
        <end position="150"/>
    </location>
</feature>
<feature type="repeat" description="1-8">
    <location>
        <begin position="151"/>
        <end position="162"/>
    </location>
</feature>
<feature type="region of interest" description="Disordered" evidence="1">
    <location>
        <begin position="1"/>
        <end position="100"/>
    </location>
</feature>
<feature type="region of interest" description="Disordered" evidence="1">
    <location>
        <begin position="122"/>
        <end position="150"/>
    </location>
</feature>
<feature type="compositionally biased region" description="Low complexity" evidence="1">
    <location>
        <begin position="1"/>
        <end position="37"/>
    </location>
</feature>
<feature type="compositionally biased region" description="Polar residues" evidence="1">
    <location>
        <begin position="38"/>
        <end position="49"/>
    </location>
</feature>
<feature type="compositionally biased region" description="Low complexity" evidence="1">
    <location>
        <begin position="53"/>
        <end position="100"/>
    </location>
</feature>
<proteinExistence type="predicted"/>
<evidence type="ECO:0000256" key="1">
    <source>
        <dbReference type="SAM" id="MobiDB-lite"/>
    </source>
</evidence>